<dbReference type="EMBL" id="CP001157">
    <property type="protein sequence ID" value="ACO77374.1"/>
    <property type="molecule type" value="Genomic_DNA"/>
</dbReference>
<dbReference type="RefSeq" id="WP_012699795.1">
    <property type="nucleotide sequence ID" value="NC_012560.1"/>
</dbReference>
<dbReference type="SMR" id="C1DPE2"/>
<dbReference type="STRING" id="322710.Avin_11450"/>
<dbReference type="EnsemblBacteria" id="ACO77374">
    <property type="protein sequence ID" value="ACO77374"/>
    <property type="gene ID" value="Avin_11450"/>
</dbReference>
<dbReference type="GeneID" id="88184477"/>
<dbReference type="KEGG" id="avn:Avin_11450"/>
<dbReference type="eggNOG" id="COG3081">
    <property type="taxonomic scope" value="Bacteria"/>
</dbReference>
<dbReference type="HOGENOM" id="CLU_063050_0_1_6"/>
<dbReference type="OrthoDB" id="9131762at2"/>
<dbReference type="Proteomes" id="UP000002424">
    <property type="component" value="Chromosome"/>
</dbReference>
<dbReference type="GO" id="GO:0043590">
    <property type="term" value="C:bacterial nucleoid"/>
    <property type="evidence" value="ECO:0007669"/>
    <property type="project" value="TreeGrafter"/>
</dbReference>
<dbReference type="GO" id="GO:0005737">
    <property type="term" value="C:cytoplasm"/>
    <property type="evidence" value="ECO:0007669"/>
    <property type="project" value="UniProtKB-UniRule"/>
</dbReference>
<dbReference type="GO" id="GO:0003690">
    <property type="term" value="F:double-stranded DNA binding"/>
    <property type="evidence" value="ECO:0007669"/>
    <property type="project" value="TreeGrafter"/>
</dbReference>
<dbReference type="GO" id="GO:0003727">
    <property type="term" value="F:single-stranded RNA binding"/>
    <property type="evidence" value="ECO:0007669"/>
    <property type="project" value="TreeGrafter"/>
</dbReference>
<dbReference type="HAMAP" id="MF_00730">
    <property type="entry name" value="NdpA"/>
    <property type="match status" value="1"/>
</dbReference>
<dbReference type="InterPro" id="IPR007358">
    <property type="entry name" value="Nucleoid_associated_NdpA"/>
</dbReference>
<dbReference type="NCBIfam" id="NF001557">
    <property type="entry name" value="PRK00378.1"/>
    <property type="match status" value="1"/>
</dbReference>
<dbReference type="PANTHER" id="PTHR38772">
    <property type="match status" value="1"/>
</dbReference>
<dbReference type="PANTHER" id="PTHR38772:SF1">
    <property type="entry name" value="NUCLEOID-ASSOCIATED PROTEIN YEJK"/>
    <property type="match status" value="1"/>
</dbReference>
<dbReference type="Pfam" id="PF04245">
    <property type="entry name" value="NA37"/>
    <property type="match status" value="1"/>
</dbReference>
<accession>C1DPE2</accession>
<comment type="subcellular location">
    <subcellularLocation>
        <location evidence="1">Cytoplasm</location>
        <location evidence="1">Nucleoid</location>
    </subcellularLocation>
</comment>
<comment type="similarity">
    <text evidence="1">Belongs to the YejK family.</text>
</comment>
<reference key="1">
    <citation type="journal article" date="2009" name="J. Bacteriol.">
        <title>Genome sequence of Azotobacter vinelandii, an obligate aerobe specialized to support diverse anaerobic metabolic processes.</title>
        <authorList>
            <person name="Setubal J.C."/>
            <person name="Dos Santos P."/>
            <person name="Goldman B.S."/>
            <person name="Ertesvaag H."/>
            <person name="Espin G."/>
            <person name="Rubio L.M."/>
            <person name="Valla S."/>
            <person name="Almeida N.F."/>
            <person name="Balasubramanian D."/>
            <person name="Cromes L."/>
            <person name="Curatti L."/>
            <person name="Du Z."/>
            <person name="Godsy E."/>
            <person name="Goodner B."/>
            <person name="Hellner-Burris K."/>
            <person name="Hernandez J.A."/>
            <person name="Houmiel K."/>
            <person name="Imperial J."/>
            <person name="Kennedy C."/>
            <person name="Larson T.J."/>
            <person name="Latreille P."/>
            <person name="Ligon L.S."/>
            <person name="Lu J."/>
            <person name="Maerk M."/>
            <person name="Miller N.M."/>
            <person name="Norton S."/>
            <person name="O'Carroll I.P."/>
            <person name="Paulsen I."/>
            <person name="Raulfs E.C."/>
            <person name="Roemer R."/>
            <person name="Rosser J."/>
            <person name="Segura D."/>
            <person name="Slater S."/>
            <person name="Stricklin S.L."/>
            <person name="Studholme D.J."/>
            <person name="Sun J."/>
            <person name="Viana C.J."/>
            <person name="Wallin E."/>
            <person name="Wang B."/>
            <person name="Wheeler C."/>
            <person name="Zhu H."/>
            <person name="Dean D.R."/>
            <person name="Dixon R."/>
            <person name="Wood D."/>
        </authorList>
    </citation>
    <scope>NUCLEOTIDE SEQUENCE [LARGE SCALE GENOMIC DNA]</scope>
    <source>
        <strain>DJ / ATCC BAA-1303</strain>
    </source>
</reference>
<name>NDPA_AZOVD</name>
<evidence type="ECO:0000255" key="1">
    <source>
        <dbReference type="HAMAP-Rule" id="MF_00730"/>
    </source>
</evidence>
<gene>
    <name type="ordered locus">Avin_11450</name>
</gene>
<feature type="chain" id="PRO_1000212732" description="Nucleoid-associated protein Avin_11450">
    <location>
        <begin position="1"/>
        <end position="337"/>
    </location>
</feature>
<keyword id="KW-0963">Cytoplasm</keyword>
<protein>
    <recommendedName>
        <fullName evidence="1">Nucleoid-associated protein Avin_11450</fullName>
    </recommendedName>
</protein>
<organism>
    <name type="scientific">Azotobacter vinelandii (strain DJ / ATCC BAA-1303)</name>
    <dbReference type="NCBI Taxonomy" id="322710"/>
    <lineage>
        <taxon>Bacteria</taxon>
        <taxon>Pseudomonadati</taxon>
        <taxon>Pseudomonadota</taxon>
        <taxon>Gammaproteobacteria</taxon>
        <taxon>Pseudomonadales</taxon>
        <taxon>Pseudomonadaceae</taxon>
        <taxon>Azotobacter</taxon>
    </lineage>
</organism>
<sequence>MPIRHCIVHLIEKKPDGSPAVLHARDSELAESQALENLLVDLNDSYNAKQGKAWGLFQEESGAYPFSGWLGAYLEGARDFAAFSRQAVEHLKTLMEESNLSSGGHVLFAHYQQGMTEYLAIALLHHSEGVTVTETLEVAPAKHLDLAQLHLAARINLSEWRNNRQSKQYISFIKGKNGKKVSDYFRDFIGCREGVDAPGETRTLLKAFSDFVESEDLAEEEAREKTSALVDYASTQARLGAPIALEELSGLIDEERPRAFYEHIRNKDYGLSPEIPPDKRTLNQFRRFTGRAEGLSISFEAHLLGSRVEYDEEHDTLTIRQVPSQLKDQLKRRKDGQ</sequence>
<proteinExistence type="inferred from homology"/>